<sequence length="493" mass="55534">MEPLRAPALRRLLPPLLLLLLSLPPRARAKYVRGNLSSKEDWVFLTRFCFLSDYGRLDFRFRYPEAKCCQNILLYFDDPSQWPAVYKAGDKDCLAKESVIRPENNQVINLTTQYAWSGCQVVSEEGTRYLSCSSGRSFRSGDGLQLEYEMVLTNGKSFWTRHFSADEFGILETDVTFLLIFILIFFLSCYFGYLLKGRQLLHTTYKMFMAAAGVEVLSLLFFCIYWGQYATDGIGNESVKILAKLLFSSSFLIFLLMLILLGKGFTVTRGRISHAGSVKLSVYMTLYTLTHVVLLIYEAEFFDPGQVLYTYESPAGYGLIGLQVAAYVWFCYAVLVSLRHFPEKQPFYVPFFAAYTLWFFAVPVMALIANFGIPKWAREKIVNGIQLGIHLYAHGVFLIMTRPSAANKNFPYHVRTSQIASAGVPGPGGSQSADKAFPQHVYGNVTFISDSVPNFTELFSIPPPATSPLPRAAPDSGLPLFRDLRPPGPLRDL</sequence>
<keyword id="KW-0325">Glycoprotein</keyword>
<keyword id="KW-0472">Membrane</keyword>
<keyword id="KW-1267">Proteomics identification</keyword>
<keyword id="KW-1185">Reference proteome</keyword>
<keyword id="KW-0812">Transmembrane</keyword>
<keyword id="KW-1133">Transmembrane helix</keyword>
<organism>
    <name type="scientific">Homo sapiens</name>
    <name type="common">Human</name>
    <dbReference type="NCBI Taxonomy" id="9606"/>
    <lineage>
        <taxon>Eukaryota</taxon>
        <taxon>Metazoa</taxon>
        <taxon>Chordata</taxon>
        <taxon>Craniata</taxon>
        <taxon>Vertebrata</taxon>
        <taxon>Euteleostomi</taxon>
        <taxon>Mammalia</taxon>
        <taxon>Eutheria</taxon>
        <taxon>Euarchontoglires</taxon>
        <taxon>Primates</taxon>
        <taxon>Haplorrhini</taxon>
        <taxon>Catarrhini</taxon>
        <taxon>Hominidae</taxon>
        <taxon>Homo</taxon>
    </lineage>
</organism>
<reference key="1">
    <citation type="journal article" date="2004" name="Nat. Genet.">
        <title>Complete sequencing and characterization of 21,243 full-length human cDNAs.</title>
        <authorList>
            <person name="Ota T."/>
            <person name="Suzuki Y."/>
            <person name="Nishikawa T."/>
            <person name="Otsuki T."/>
            <person name="Sugiyama T."/>
            <person name="Irie R."/>
            <person name="Wakamatsu A."/>
            <person name="Hayashi K."/>
            <person name="Sato H."/>
            <person name="Nagai K."/>
            <person name="Kimura K."/>
            <person name="Makita H."/>
            <person name="Sekine M."/>
            <person name="Obayashi M."/>
            <person name="Nishi T."/>
            <person name="Shibahara T."/>
            <person name="Tanaka T."/>
            <person name="Ishii S."/>
            <person name="Yamamoto J."/>
            <person name="Saito K."/>
            <person name="Kawai Y."/>
            <person name="Isono Y."/>
            <person name="Nakamura Y."/>
            <person name="Nagahari K."/>
            <person name="Murakami K."/>
            <person name="Yasuda T."/>
            <person name="Iwayanagi T."/>
            <person name="Wagatsuma M."/>
            <person name="Shiratori A."/>
            <person name="Sudo H."/>
            <person name="Hosoiri T."/>
            <person name="Kaku Y."/>
            <person name="Kodaira H."/>
            <person name="Kondo H."/>
            <person name="Sugawara M."/>
            <person name="Takahashi M."/>
            <person name="Kanda K."/>
            <person name="Yokoi T."/>
            <person name="Furuya T."/>
            <person name="Kikkawa E."/>
            <person name="Omura Y."/>
            <person name="Abe K."/>
            <person name="Kamihara K."/>
            <person name="Katsuta N."/>
            <person name="Sato K."/>
            <person name="Tanikawa M."/>
            <person name="Yamazaki M."/>
            <person name="Ninomiya K."/>
            <person name="Ishibashi T."/>
            <person name="Yamashita H."/>
            <person name="Murakawa K."/>
            <person name="Fujimori K."/>
            <person name="Tanai H."/>
            <person name="Kimata M."/>
            <person name="Watanabe M."/>
            <person name="Hiraoka S."/>
            <person name="Chiba Y."/>
            <person name="Ishida S."/>
            <person name="Ono Y."/>
            <person name="Takiguchi S."/>
            <person name="Watanabe S."/>
            <person name="Yosida M."/>
            <person name="Hotuta T."/>
            <person name="Kusano J."/>
            <person name="Kanehori K."/>
            <person name="Takahashi-Fujii A."/>
            <person name="Hara H."/>
            <person name="Tanase T.-O."/>
            <person name="Nomura Y."/>
            <person name="Togiya S."/>
            <person name="Komai F."/>
            <person name="Hara R."/>
            <person name="Takeuchi K."/>
            <person name="Arita M."/>
            <person name="Imose N."/>
            <person name="Musashino K."/>
            <person name="Yuuki H."/>
            <person name="Oshima A."/>
            <person name="Sasaki N."/>
            <person name="Aotsuka S."/>
            <person name="Yoshikawa Y."/>
            <person name="Matsunawa H."/>
            <person name="Ichihara T."/>
            <person name="Shiohata N."/>
            <person name="Sano S."/>
            <person name="Moriya S."/>
            <person name="Momiyama H."/>
            <person name="Satoh N."/>
            <person name="Takami S."/>
            <person name="Terashima Y."/>
            <person name="Suzuki O."/>
            <person name="Nakagawa S."/>
            <person name="Senoh A."/>
            <person name="Mizoguchi H."/>
            <person name="Goto Y."/>
            <person name="Shimizu F."/>
            <person name="Wakebe H."/>
            <person name="Hishigaki H."/>
            <person name="Watanabe T."/>
            <person name="Sugiyama A."/>
            <person name="Takemoto M."/>
            <person name="Kawakami B."/>
            <person name="Yamazaki M."/>
            <person name="Watanabe K."/>
            <person name="Kumagai A."/>
            <person name="Itakura S."/>
            <person name="Fukuzumi Y."/>
            <person name="Fujimori Y."/>
            <person name="Komiyama M."/>
            <person name="Tashiro H."/>
            <person name="Tanigami A."/>
            <person name="Fujiwara T."/>
            <person name="Ono T."/>
            <person name="Yamada K."/>
            <person name="Fujii Y."/>
            <person name="Ozaki K."/>
            <person name="Hirao M."/>
            <person name="Ohmori Y."/>
            <person name="Kawabata A."/>
            <person name="Hikiji T."/>
            <person name="Kobatake N."/>
            <person name="Inagaki H."/>
            <person name="Ikema Y."/>
            <person name="Okamoto S."/>
            <person name="Okitani R."/>
            <person name="Kawakami T."/>
            <person name="Noguchi S."/>
            <person name="Itoh T."/>
            <person name="Shigeta K."/>
            <person name="Senba T."/>
            <person name="Matsumura K."/>
            <person name="Nakajima Y."/>
            <person name="Mizuno T."/>
            <person name="Morinaga M."/>
            <person name="Sasaki M."/>
            <person name="Togashi T."/>
            <person name="Oyama M."/>
            <person name="Hata H."/>
            <person name="Watanabe M."/>
            <person name="Komatsu T."/>
            <person name="Mizushima-Sugano J."/>
            <person name="Satoh T."/>
            <person name="Shirai Y."/>
            <person name="Takahashi Y."/>
            <person name="Nakagawa K."/>
            <person name="Okumura K."/>
            <person name="Nagase T."/>
            <person name="Nomura N."/>
            <person name="Kikuchi H."/>
            <person name="Masuho Y."/>
            <person name="Yamashita R."/>
            <person name="Nakai K."/>
            <person name="Yada T."/>
            <person name="Nakamura Y."/>
            <person name="Ohara O."/>
            <person name="Isogai T."/>
            <person name="Sugano S."/>
        </authorList>
    </citation>
    <scope>NUCLEOTIDE SEQUENCE [LARGE SCALE MRNA]</scope>
    <source>
        <tissue>Retinoblastoma</tissue>
    </source>
</reference>
<reference key="2">
    <citation type="journal article" date="2004" name="Nature">
        <title>The DNA sequence and biology of human chromosome 19.</title>
        <authorList>
            <person name="Grimwood J."/>
            <person name="Gordon L.A."/>
            <person name="Olsen A.S."/>
            <person name="Terry A."/>
            <person name="Schmutz J."/>
            <person name="Lamerdin J.E."/>
            <person name="Hellsten U."/>
            <person name="Goodstein D."/>
            <person name="Couronne O."/>
            <person name="Tran-Gyamfi M."/>
            <person name="Aerts A."/>
            <person name="Altherr M."/>
            <person name="Ashworth L."/>
            <person name="Bajorek E."/>
            <person name="Black S."/>
            <person name="Branscomb E."/>
            <person name="Caenepeel S."/>
            <person name="Carrano A.V."/>
            <person name="Caoile C."/>
            <person name="Chan Y.M."/>
            <person name="Christensen M."/>
            <person name="Cleland C.A."/>
            <person name="Copeland A."/>
            <person name="Dalin E."/>
            <person name="Dehal P."/>
            <person name="Denys M."/>
            <person name="Detter J.C."/>
            <person name="Escobar J."/>
            <person name="Flowers D."/>
            <person name="Fotopulos D."/>
            <person name="Garcia C."/>
            <person name="Georgescu A.M."/>
            <person name="Glavina T."/>
            <person name="Gomez M."/>
            <person name="Gonzales E."/>
            <person name="Groza M."/>
            <person name="Hammon N."/>
            <person name="Hawkins T."/>
            <person name="Haydu L."/>
            <person name="Ho I."/>
            <person name="Huang W."/>
            <person name="Israni S."/>
            <person name="Jett J."/>
            <person name="Kadner K."/>
            <person name="Kimball H."/>
            <person name="Kobayashi A."/>
            <person name="Larionov V."/>
            <person name="Leem S.-H."/>
            <person name="Lopez F."/>
            <person name="Lou Y."/>
            <person name="Lowry S."/>
            <person name="Malfatti S."/>
            <person name="Martinez D."/>
            <person name="McCready P.M."/>
            <person name="Medina C."/>
            <person name="Morgan J."/>
            <person name="Nelson K."/>
            <person name="Nolan M."/>
            <person name="Ovcharenko I."/>
            <person name="Pitluck S."/>
            <person name="Pollard M."/>
            <person name="Popkie A.P."/>
            <person name="Predki P."/>
            <person name="Quan G."/>
            <person name="Ramirez L."/>
            <person name="Rash S."/>
            <person name="Retterer J."/>
            <person name="Rodriguez A."/>
            <person name="Rogers S."/>
            <person name="Salamov A."/>
            <person name="Salazar A."/>
            <person name="She X."/>
            <person name="Smith D."/>
            <person name="Slezak T."/>
            <person name="Solovyev V."/>
            <person name="Thayer N."/>
            <person name="Tice H."/>
            <person name="Tsai M."/>
            <person name="Ustaszewska A."/>
            <person name="Vo N."/>
            <person name="Wagner M."/>
            <person name="Wheeler J."/>
            <person name="Wu K."/>
            <person name="Xie G."/>
            <person name="Yang J."/>
            <person name="Dubchak I."/>
            <person name="Furey T.S."/>
            <person name="DeJong P."/>
            <person name="Dickson M."/>
            <person name="Gordon D."/>
            <person name="Eichler E.E."/>
            <person name="Pennacchio L.A."/>
            <person name="Richardson P."/>
            <person name="Stubbs L."/>
            <person name="Rokhsar D.S."/>
            <person name="Myers R.M."/>
            <person name="Rubin E.M."/>
            <person name="Lucas S.M."/>
        </authorList>
    </citation>
    <scope>NUCLEOTIDE SEQUENCE [LARGE SCALE GENOMIC DNA]</scope>
</reference>
<comment type="subcellular location">
    <subcellularLocation>
        <location evidence="3">Membrane</location>
        <topology evidence="3">Multi-pass membrane protein</topology>
    </subcellularLocation>
</comment>
<gene>
    <name type="primary">TMEM145</name>
</gene>
<name>TM145_HUMAN</name>
<evidence type="ECO:0000255" key="1"/>
<evidence type="ECO:0000256" key="2">
    <source>
        <dbReference type="SAM" id="MobiDB-lite"/>
    </source>
</evidence>
<evidence type="ECO:0000305" key="3"/>
<proteinExistence type="evidence at protein level"/>
<accession>Q8NBT3</accession>
<dbReference type="EMBL" id="AK075286">
    <property type="protein sequence ID" value="BAC11522.1"/>
    <property type="molecule type" value="mRNA"/>
</dbReference>
<dbReference type="EMBL" id="AC024078">
    <property type="status" value="NOT_ANNOTATED_CDS"/>
    <property type="molecule type" value="Genomic_DNA"/>
</dbReference>
<dbReference type="CCDS" id="CCDS12603.1"/>
<dbReference type="RefSeq" id="NP_775904.2">
    <property type="nucleotide sequence ID" value="NM_173633.3"/>
</dbReference>
<dbReference type="BioGRID" id="129831">
    <property type="interactions" value="1"/>
</dbReference>
<dbReference type="FunCoup" id="Q8NBT3">
    <property type="interactions" value="23"/>
</dbReference>
<dbReference type="STRING" id="9606.ENSP00000301204"/>
<dbReference type="TCDB" id="9.A.14.26.4">
    <property type="family name" value="the g-protein-coupled receptor (gpcr) family"/>
</dbReference>
<dbReference type="GlyCosmos" id="Q8NBT3">
    <property type="glycosylation" value="2 sites, No reported glycans"/>
</dbReference>
<dbReference type="GlyGen" id="Q8NBT3">
    <property type="glycosylation" value="3 sites, 1 N-linked glycan (1 site), 1 O-linked glycan (1 site)"/>
</dbReference>
<dbReference type="iPTMnet" id="Q8NBT3"/>
<dbReference type="PhosphoSitePlus" id="Q8NBT3"/>
<dbReference type="BioMuta" id="TMEM145"/>
<dbReference type="DMDM" id="296452935"/>
<dbReference type="MassIVE" id="Q8NBT3"/>
<dbReference type="PaxDb" id="9606-ENSP00000301204"/>
<dbReference type="PeptideAtlas" id="Q8NBT3"/>
<dbReference type="ProteomicsDB" id="72821"/>
<dbReference type="Antibodypedia" id="58359">
    <property type="antibodies" value="56 antibodies from 18 providers"/>
</dbReference>
<dbReference type="DNASU" id="284339"/>
<dbReference type="Ensembl" id="ENST00000301204.8">
    <property type="protein sequence ID" value="ENSP00000301204.2"/>
    <property type="gene ID" value="ENSG00000167619.13"/>
</dbReference>
<dbReference type="GeneID" id="284339"/>
<dbReference type="KEGG" id="hsa:284339"/>
<dbReference type="MANE-Select" id="ENST00000301204.8">
    <property type="protein sequence ID" value="ENSP00000301204.2"/>
    <property type="RefSeq nucleotide sequence ID" value="NM_173633.3"/>
    <property type="RefSeq protein sequence ID" value="NP_775904.2"/>
</dbReference>
<dbReference type="UCSC" id="uc002otk.2">
    <property type="organism name" value="human"/>
</dbReference>
<dbReference type="AGR" id="HGNC:26912"/>
<dbReference type="CTD" id="284339"/>
<dbReference type="GeneCards" id="TMEM145"/>
<dbReference type="HGNC" id="HGNC:26912">
    <property type="gene designation" value="TMEM145"/>
</dbReference>
<dbReference type="HPA" id="ENSG00000167619">
    <property type="expression patterns" value="Tissue enriched (brain)"/>
</dbReference>
<dbReference type="neXtProt" id="NX_Q8NBT3"/>
<dbReference type="OpenTargets" id="ENSG00000167619"/>
<dbReference type="PharmGKB" id="PA144596253"/>
<dbReference type="VEuPathDB" id="HostDB:ENSG00000167619"/>
<dbReference type="eggNOG" id="KOG1388">
    <property type="taxonomic scope" value="Eukaryota"/>
</dbReference>
<dbReference type="eggNOG" id="KOG4290">
    <property type="taxonomic scope" value="Eukaryota"/>
</dbReference>
<dbReference type="GeneTree" id="ENSGT00940000153981"/>
<dbReference type="HOGENOM" id="CLU_021549_3_0_1"/>
<dbReference type="InParanoid" id="Q8NBT3"/>
<dbReference type="OMA" id="YTWSGCA"/>
<dbReference type="OrthoDB" id="205745at2759"/>
<dbReference type="PAN-GO" id="Q8NBT3">
    <property type="GO annotations" value="0 GO annotations based on evolutionary models"/>
</dbReference>
<dbReference type="PhylomeDB" id="Q8NBT3"/>
<dbReference type="TreeFam" id="TF314975"/>
<dbReference type="PathwayCommons" id="Q8NBT3"/>
<dbReference type="SignaLink" id="Q8NBT3"/>
<dbReference type="BioGRID-ORCS" id="284339">
    <property type="hits" value="11 hits in 1147 CRISPR screens"/>
</dbReference>
<dbReference type="GenomeRNAi" id="284339"/>
<dbReference type="Pharos" id="Q8NBT3">
    <property type="development level" value="Tdark"/>
</dbReference>
<dbReference type="PRO" id="PR:Q8NBT3"/>
<dbReference type="Proteomes" id="UP000005640">
    <property type="component" value="Chromosome 19"/>
</dbReference>
<dbReference type="RNAct" id="Q8NBT3">
    <property type="molecule type" value="protein"/>
</dbReference>
<dbReference type="Bgee" id="ENSG00000167619">
    <property type="expression patterns" value="Expressed in right hemisphere of cerebellum and 97 other cell types or tissues"/>
</dbReference>
<dbReference type="ExpressionAtlas" id="Q8NBT3">
    <property type="expression patterns" value="baseline and differential"/>
</dbReference>
<dbReference type="GO" id="GO:0016020">
    <property type="term" value="C:membrane"/>
    <property type="evidence" value="ECO:0007669"/>
    <property type="project" value="UniProtKB-SubCell"/>
</dbReference>
<dbReference type="GO" id="GO:0007186">
    <property type="term" value="P:G protein-coupled receptor signaling pathway"/>
    <property type="evidence" value="ECO:0007669"/>
    <property type="project" value="InterPro"/>
</dbReference>
<dbReference type="GO" id="GO:0019236">
    <property type="term" value="P:response to pheromone"/>
    <property type="evidence" value="ECO:0007669"/>
    <property type="project" value="InterPro"/>
</dbReference>
<dbReference type="InterPro" id="IPR053880">
    <property type="entry name" value="GPR180-like_N"/>
</dbReference>
<dbReference type="InterPro" id="IPR047831">
    <property type="entry name" value="GPR180/TMEM145"/>
</dbReference>
<dbReference type="InterPro" id="IPR019336">
    <property type="entry name" value="GPR180/TMEM145_TM"/>
</dbReference>
<dbReference type="PANTHER" id="PTHR23252">
    <property type="entry name" value="INTIMAL THICKNESS RECEPTOR-RELATED"/>
    <property type="match status" value="1"/>
</dbReference>
<dbReference type="PANTHER" id="PTHR23252:SF24">
    <property type="entry name" value="TRANSMEMBRANE PROTEIN 145"/>
    <property type="match status" value="1"/>
</dbReference>
<dbReference type="Pfam" id="PF10192">
    <property type="entry name" value="GPR180-TMEM145_TM"/>
    <property type="match status" value="1"/>
</dbReference>
<dbReference type="Pfam" id="PF21892">
    <property type="entry name" value="TMEM145_N"/>
    <property type="match status" value="1"/>
</dbReference>
<feature type="chain" id="PRO_0000280355" description="Transmembrane protein 145">
    <location>
        <begin position="1"/>
        <end position="493"/>
    </location>
</feature>
<feature type="transmembrane region" description="Helical" evidence="1">
    <location>
        <begin position="9"/>
        <end position="29"/>
    </location>
</feature>
<feature type="transmembrane region" description="Helical" evidence="1">
    <location>
        <begin position="175"/>
        <end position="195"/>
    </location>
</feature>
<feature type="transmembrane region" description="Helical" evidence="1">
    <location>
        <begin position="207"/>
        <end position="227"/>
    </location>
</feature>
<feature type="transmembrane region" description="Helical" evidence="1">
    <location>
        <begin position="241"/>
        <end position="261"/>
    </location>
</feature>
<feature type="transmembrane region" description="Helical" evidence="1">
    <location>
        <begin position="282"/>
        <end position="302"/>
    </location>
</feature>
<feature type="transmembrane region" description="Helical" evidence="1">
    <location>
        <begin position="318"/>
        <end position="338"/>
    </location>
</feature>
<feature type="transmembrane region" description="Helical" evidence="1">
    <location>
        <begin position="349"/>
        <end position="369"/>
    </location>
</feature>
<feature type="transmembrane region" description="Helical" evidence="1">
    <location>
        <begin position="381"/>
        <end position="401"/>
    </location>
</feature>
<feature type="region of interest" description="Disordered" evidence="2">
    <location>
        <begin position="464"/>
        <end position="493"/>
    </location>
</feature>
<feature type="glycosylation site" description="N-linked (GlcNAc...) asparagine" evidence="1">
    <location>
        <position position="35"/>
    </location>
</feature>
<feature type="glycosylation site" description="N-linked (GlcNAc...) asparagine" evidence="1">
    <location>
        <position position="444"/>
    </location>
</feature>
<feature type="sequence variant" id="VAR_060400" description="In dbSNP:rs7254227.">
    <original>L</original>
    <variation>M</variation>
    <location>
        <position position="256"/>
    </location>
</feature>
<feature type="sequence conflict" description="In Ref. 1; BAC11522." evidence="3" ref="1">
    <original>S</original>
    <variation>P</variation>
    <location>
        <position position="281"/>
    </location>
</feature>
<feature type="sequence conflict" description="In Ref. 1; BAC11522." evidence="3" ref="1">
    <original>S</original>
    <variation>F</variation>
    <location>
        <position position="467"/>
    </location>
</feature>
<protein>
    <recommendedName>
        <fullName>Transmembrane protein 145</fullName>
    </recommendedName>
</protein>